<reference key="1">
    <citation type="journal article" date="2007" name="J. Bacteriol.">
        <title>Whole-genome analysis of the methyl tert-butyl ether-degrading beta-proteobacterium Methylibium petroleiphilum PM1.</title>
        <authorList>
            <person name="Kane S.R."/>
            <person name="Chakicherla A.Y."/>
            <person name="Chain P.S.G."/>
            <person name="Schmidt R."/>
            <person name="Shin M.W."/>
            <person name="Legler T.C."/>
            <person name="Scow K.M."/>
            <person name="Larimer F.W."/>
            <person name="Lucas S.M."/>
            <person name="Richardson P.M."/>
            <person name="Hristova K.R."/>
        </authorList>
    </citation>
    <scope>NUCLEOTIDE SEQUENCE [LARGE SCALE GENOMIC DNA]</scope>
    <source>
        <strain>ATCC BAA-1232 / LMG 22953 / PM1</strain>
    </source>
</reference>
<proteinExistence type="inferred from homology"/>
<gene>
    <name evidence="1" type="primary">ureA</name>
    <name type="ordered locus">Mpe_A0669</name>
</gene>
<sequence>MDLTPREKDKLLIFTAALLAERRRARGLKLNHPEAVALITAAILEGARDGQSVAQLMSAGQQVLTRADVMDGVAEMIPDIQVEATFPDGTKLVTVHQPIA</sequence>
<name>URE3_METPP</name>
<evidence type="ECO:0000255" key="1">
    <source>
        <dbReference type="HAMAP-Rule" id="MF_00739"/>
    </source>
</evidence>
<keyword id="KW-0963">Cytoplasm</keyword>
<keyword id="KW-0378">Hydrolase</keyword>
<keyword id="KW-1185">Reference proteome</keyword>
<feature type="chain" id="PRO_1000046336" description="Urease subunit gamma">
    <location>
        <begin position="1"/>
        <end position="100"/>
    </location>
</feature>
<accession>A2SDJ2</accession>
<organism>
    <name type="scientific">Methylibium petroleiphilum (strain ATCC BAA-1232 / LMG 22953 / PM1)</name>
    <dbReference type="NCBI Taxonomy" id="420662"/>
    <lineage>
        <taxon>Bacteria</taxon>
        <taxon>Pseudomonadati</taxon>
        <taxon>Pseudomonadota</taxon>
        <taxon>Betaproteobacteria</taxon>
        <taxon>Burkholderiales</taxon>
        <taxon>Sphaerotilaceae</taxon>
        <taxon>Methylibium</taxon>
    </lineage>
</organism>
<comment type="catalytic activity">
    <reaction evidence="1">
        <text>urea + 2 H2O + H(+) = hydrogencarbonate + 2 NH4(+)</text>
        <dbReference type="Rhea" id="RHEA:20557"/>
        <dbReference type="ChEBI" id="CHEBI:15377"/>
        <dbReference type="ChEBI" id="CHEBI:15378"/>
        <dbReference type="ChEBI" id="CHEBI:16199"/>
        <dbReference type="ChEBI" id="CHEBI:17544"/>
        <dbReference type="ChEBI" id="CHEBI:28938"/>
        <dbReference type="EC" id="3.5.1.5"/>
    </reaction>
</comment>
<comment type="pathway">
    <text evidence="1">Nitrogen metabolism; urea degradation; CO(2) and NH(3) from urea (urease route): step 1/1.</text>
</comment>
<comment type="subunit">
    <text evidence="1">Heterotrimer of UreA (gamma), UreB (beta) and UreC (alpha) subunits. Three heterotrimers associate to form the active enzyme.</text>
</comment>
<comment type="subcellular location">
    <subcellularLocation>
        <location evidence="1">Cytoplasm</location>
    </subcellularLocation>
</comment>
<comment type="similarity">
    <text evidence="1">Belongs to the urease gamma subunit family.</text>
</comment>
<protein>
    <recommendedName>
        <fullName evidence="1">Urease subunit gamma</fullName>
        <ecNumber evidence="1">3.5.1.5</ecNumber>
    </recommendedName>
    <alternativeName>
        <fullName evidence="1">Urea amidohydrolase subunit gamma</fullName>
    </alternativeName>
</protein>
<dbReference type="EC" id="3.5.1.5" evidence="1"/>
<dbReference type="EMBL" id="CP000555">
    <property type="protein sequence ID" value="ABM93631.1"/>
    <property type="molecule type" value="Genomic_DNA"/>
</dbReference>
<dbReference type="RefSeq" id="WP_011828269.1">
    <property type="nucleotide sequence ID" value="NC_008825.1"/>
</dbReference>
<dbReference type="SMR" id="A2SDJ2"/>
<dbReference type="STRING" id="420662.Mpe_A0669"/>
<dbReference type="KEGG" id="mpt:Mpe_A0669"/>
<dbReference type="eggNOG" id="COG0831">
    <property type="taxonomic scope" value="Bacteria"/>
</dbReference>
<dbReference type="HOGENOM" id="CLU_145825_1_0_4"/>
<dbReference type="UniPathway" id="UPA00258">
    <property type="reaction ID" value="UER00370"/>
</dbReference>
<dbReference type="Proteomes" id="UP000000366">
    <property type="component" value="Chromosome"/>
</dbReference>
<dbReference type="GO" id="GO:0005737">
    <property type="term" value="C:cytoplasm"/>
    <property type="evidence" value="ECO:0007669"/>
    <property type="project" value="UniProtKB-SubCell"/>
</dbReference>
<dbReference type="GO" id="GO:0016151">
    <property type="term" value="F:nickel cation binding"/>
    <property type="evidence" value="ECO:0007669"/>
    <property type="project" value="InterPro"/>
</dbReference>
<dbReference type="GO" id="GO:0009039">
    <property type="term" value="F:urease activity"/>
    <property type="evidence" value="ECO:0007669"/>
    <property type="project" value="UniProtKB-UniRule"/>
</dbReference>
<dbReference type="GO" id="GO:0043419">
    <property type="term" value="P:urea catabolic process"/>
    <property type="evidence" value="ECO:0007669"/>
    <property type="project" value="UniProtKB-UniRule"/>
</dbReference>
<dbReference type="CDD" id="cd00390">
    <property type="entry name" value="Urease_gamma"/>
    <property type="match status" value="1"/>
</dbReference>
<dbReference type="Gene3D" id="3.30.280.10">
    <property type="entry name" value="Urease, gamma-like subunit"/>
    <property type="match status" value="1"/>
</dbReference>
<dbReference type="HAMAP" id="MF_00739">
    <property type="entry name" value="Urease_gamma"/>
    <property type="match status" value="1"/>
</dbReference>
<dbReference type="InterPro" id="IPR012010">
    <property type="entry name" value="Urease_gamma"/>
</dbReference>
<dbReference type="InterPro" id="IPR002026">
    <property type="entry name" value="Urease_gamma/gamma-beta_su"/>
</dbReference>
<dbReference type="InterPro" id="IPR036463">
    <property type="entry name" value="Urease_gamma_sf"/>
</dbReference>
<dbReference type="InterPro" id="IPR050069">
    <property type="entry name" value="Urease_subunit"/>
</dbReference>
<dbReference type="NCBIfam" id="NF009712">
    <property type="entry name" value="PRK13241.1"/>
    <property type="match status" value="1"/>
</dbReference>
<dbReference type="NCBIfam" id="TIGR00193">
    <property type="entry name" value="urease_gam"/>
    <property type="match status" value="1"/>
</dbReference>
<dbReference type="PANTHER" id="PTHR33569">
    <property type="entry name" value="UREASE"/>
    <property type="match status" value="1"/>
</dbReference>
<dbReference type="PANTHER" id="PTHR33569:SF1">
    <property type="entry name" value="UREASE"/>
    <property type="match status" value="1"/>
</dbReference>
<dbReference type="Pfam" id="PF00547">
    <property type="entry name" value="Urease_gamma"/>
    <property type="match status" value="1"/>
</dbReference>
<dbReference type="PIRSF" id="PIRSF001223">
    <property type="entry name" value="Urease_gamma"/>
    <property type="match status" value="1"/>
</dbReference>
<dbReference type="SUPFAM" id="SSF54111">
    <property type="entry name" value="Urease, gamma-subunit"/>
    <property type="match status" value="1"/>
</dbReference>